<gene>
    <name type="primary">ERV2</name>
    <name type="ordered locus">YPR037C</name>
    <name type="ORF">YP3085.03C</name>
</gene>
<comment type="function">
    <text evidence="2 3 4">FAD-dependent sulfhydryl oxidase that catalyzes disulfide bond formation in the endoplasmic reticulum lumen in parallel to ERO1.</text>
</comment>
<comment type="catalytic activity">
    <reaction evidence="3">
        <text>2 R'C(R)SH + O2 = R'C(R)S-S(R)CR' + H2O2</text>
        <dbReference type="Rhea" id="RHEA:17357"/>
        <dbReference type="ChEBI" id="CHEBI:15379"/>
        <dbReference type="ChEBI" id="CHEBI:16240"/>
        <dbReference type="ChEBI" id="CHEBI:16520"/>
        <dbReference type="ChEBI" id="CHEBI:17412"/>
        <dbReference type="EC" id="1.8.3.2"/>
    </reaction>
</comment>
<comment type="cofactor">
    <cofactor evidence="2 3 4 5">
        <name>FAD</name>
        <dbReference type="ChEBI" id="CHEBI:57692"/>
    </cofactor>
</comment>
<comment type="subunit">
    <text evidence="3 4">Homodimer. Interacts with the substrate protein PDI1, forming transient intermolecular disulfide bridges.</text>
</comment>
<comment type="subcellular location">
    <subcellularLocation>
        <location evidence="3 4">Endoplasmic reticulum membrane</location>
        <topology evidence="3 4">Single-pass type III membrane protein</topology>
        <orientation evidence="3 4">Lumenal side</orientation>
    </subcellularLocation>
</comment>
<comment type="miscellaneous">
    <text evidence="6">Present with 259 molecules/cell in log phase SD medium.</text>
</comment>
<proteinExistence type="evidence at protein level"/>
<accession>Q12284</accession>
<accession>D6W448</accession>
<sequence>MKQIVKRSHAIRIVAALGIIGLWMFFSSNELSIATPGLIKAKSGIDEVQGAAAEKNDARLKEIEKQTIMPLMGDDKVKKEVGRASWKYFHTLLARFPDEPTPEEREKLHTFIGLYAELYPCGECSYHFVKLIEKYPVQTSSRTAAAMWGCHIHNKVNEYLKKDIYDCATILEDYDCGCSDSDGKRVSLEKEAKQHG</sequence>
<name>ERV2_YEAST</name>
<organism>
    <name type="scientific">Saccharomyces cerevisiae (strain ATCC 204508 / S288c)</name>
    <name type="common">Baker's yeast</name>
    <dbReference type="NCBI Taxonomy" id="559292"/>
    <lineage>
        <taxon>Eukaryota</taxon>
        <taxon>Fungi</taxon>
        <taxon>Dikarya</taxon>
        <taxon>Ascomycota</taxon>
        <taxon>Saccharomycotina</taxon>
        <taxon>Saccharomycetes</taxon>
        <taxon>Saccharomycetales</taxon>
        <taxon>Saccharomycetaceae</taxon>
        <taxon>Saccharomyces</taxon>
    </lineage>
</organism>
<protein>
    <recommendedName>
        <fullName>FAD-linked sulfhydryl oxidase ERV2</fullName>
        <ecNumber evidence="3">1.8.3.2</ecNumber>
    </recommendedName>
</protein>
<feature type="chain" id="PRO_0000001188" description="FAD-linked sulfhydryl oxidase ERV2">
    <location>
        <begin position="1"/>
        <end position="196"/>
    </location>
</feature>
<feature type="topological domain" description="Cytoplasmic" evidence="1">
    <location>
        <begin position="1"/>
        <end position="12"/>
    </location>
</feature>
<feature type="transmembrane region" description="Helical; Signal-anchor" evidence="1">
    <location>
        <begin position="13"/>
        <end position="35"/>
    </location>
</feature>
<feature type="topological domain" description="Lumenal" evidence="1">
    <location>
        <begin position="36"/>
        <end position="196"/>
    </location>
</feature>
<feature type="domain" description="ERV/ALR sulfhydryl oxidase" evidence="2">
    <location>
        <begin position="72"/>
        <end position="174"/>
    </location>
</feature>
<feature type="binding site" evidence="5 7 8">
    <location>
        <position position="78"/>
    </location>
    <ligand>
        <name>FAD</name>
        <dbReference type="ChEBI" id="CHEBI:57692"/>
    </ligand>
</feature>
<feature type="binding site" evidence="5 7 8">
    <location>
        <position position="83"/>
    </location>
    <ligand>
        <name>FAD</name>
        <dbReference type="ChEBI" id="CHEBI:57692"/>
    </ligand>
</feature>
<feature type="binding site" evidence="5 7 8">
    <location>
        <position position="86"/>
    </location>
    <ligand>
        <name>FAD</name>
        <dbReference type="ChEBI" id="CHEBI:57692"/>
    </ligand>
</feature>
<feature type="binding site" evidence="5 7 8">
    <location>
        <position position="127"/>
    </location>
    <ligand>
        <name>FAD</name>
        <dbReference type="ChEBI" id="CHEBI:57692"/>
    </ligand>
</feature>
<feature type="binding site" evidence="5 7 8">
    <location>
        <position position="150"/>
    </location>
    <ligand>
        <name>FAD</name>
        <dbReference type="ChEBI" id="CHEBI:57692"/>
    </ligand>
</feature>
<feature type="binding site" evidence="5 7 8">
    <location>
        <position position="153"/>
    </location>
    <ligand>
        <name>FAD</name>
        <dbReference type="ChEBI" id="CHEBI:57692"/>
    </ligand>
</feature>
<feature type="binding site" evidence="5 7 8">
    <location>
        <position position="157"/>
    </location>
    <ligand>
        <name>FAD</name>
        <dbReference type="ChEBI" id="CHEBI:57692"/>
    </ligand>
</feature>
<feature type="binding site" evidence="5 7 8">
    <location>
        <position position="162"/>
    </location>
    <ligand>
        <name>FAD</name>
        <dbReference type="ChEBI" id="CHEBI:57692"/>
    </ligand>
</feature>
<feature type="binding site" evidence="5 7 8">
    <location>
        <position position="174"/>
    </location>
    <ligand>
        <name>FAD</name>
        <dbReference type="ChEBI" id="CHEBI:57692"/>
    </ligand>
</feature>
<feature type="disulfide bond" description="Redox-active" evidence="2">
    <location>
        <begin position="121"/>
        <end position="124"/>
    </location>
</feature>
<feature type="disulfide bond" evidence="2 5">
    <location>
        <begin position="150"/>
        <end position="167"/>
    </location>
</feature>
<feature type="disulfide bond" evidence="2 5">
    <location>
        <begin position="176"/>
        <end position="178"/>
    </location>
</feature>
<feature type="mutagenesis site" description="Loss of function." evidence="4">
    <original>C</original>
    <variation>A</variation>
    <location>
        <position position="121"/>
    </location>
</feature>
<feature type="mutagenesis site" description="Loss of function." evidence="4">
    <original>C</original>
    <variation>A</variation>
    <location>
        <position position="124"/>
    </location>
</feature>
<feature type="helix" evidence="9">
    <location>
        <begin position="75"/>
        <end position="94"/>
    </location>
</feature>
<feature type="helix" evidence="9">
    <location>
        <begin position="102"/>
        <end position="118"/>
    </location>
</feature>
<feature type="helix" evidence="9">
    <location>
        <begin position="122"/>
        <end position="134"/>
    </location>
</feature>
<feature type="helix" evidence="9">
    <location>
        <begin position="142"/>
        <end position="159"/>
    </location>
</feature>
<feature type="helix" evidence="9">
    <location>
        <begin position="170"/>
        <end position="173"/>
    </location>
</feature>
<dbReference type="EC" id="1.8.3.2" evidence="3"/>
<dbReference type="EMBL" id="Z71255">
    <property type="protein sequence ID" value="CAA94987.1"/>
    <property type="molecule type" value="Genomic_DNA"/>
</dbReference>
<dbReference type="EMBL" id="Z68111">
    <property type="protein sequence ID" value="CAA92143.1"/>
    <property type="molecule type" value="Genomic_DNA"/>
</dbReference>
<dbReference type="EMBL" id="BK006949">
    <property type="protein sequence ID" value="DAA11464.1"/>
    <property type="molecule type" value="Genomic_DNA"/>
</dbReference>
<dbReference type="PIR" id="S61060">
    <property type="entry name" value="S61060"/>
</dbReference>
<dbReference type="RefSeq" id="NP_015362.1">
    <property type="nucleotide sequence ID" value="NM_001184134.1"/>
</dbReference>
<dbReference type="PDB" id="1JR8">
    <property type="method" value="X-ray"/>
    <property type="resolution" value="1.50 A"/>
    <property type="chains" value="A/B=71-187"/>
</dbReference>
<dbReference type="PDB" id="1JRA">
    <property type="method" value="X-ray"/>
    <property type="resolution" value="2.00 A"/>
    <property type="chains" value="A/B/C/D=71-187"/>
</dbReference>
<dbReference type="PDBsum" id="1JR8"/>
<dbReference type="PDBsum" id="1JRA"/>
<dbReference type="SMR" id="Q12284"/>
<dbReference type="BioGRID" id="36216">
    <property type="interactions" value="84"/>
</dbReference>
<dbReference type="DIP" id="DIP-3906N"/>
<dbReference type="FunCoup" id="Q12284">
    <property type="interactions" value="39"/>
</dbReference>
<dbReference type="IntAct" id="Q12284">
    <property type="interactions" value="29"/>
</dbReference>
<dbReference type="MINT" id="Q12284"/>
<dbReference type="STRING" id="4932.YPR037C"/>
<dbReference type="GlyGen" id="Q12284">
    <property type="glycosylation" value="1 site"/>
</dbReference>
<dbReference type="iPTMnet" id="Q12284"/>
<dbReference type="PaxDb" id="4932-YPR037C"/>
<dbReference type="PeptideAtlas" id="Q12284"/>
<dbReference type="EnsemblFungi" id="YPR037C_mRNA">
    <property type="protein sequence ID" value="YPR037C"/>
    <property type="gene ID" value="YPR037C"/>
</dbReference>
<dbReference type="GeneID" id="856152"/>
<dbReference type="KEGG" id="sce:YPR037C"/>
<dbReference type="AGR" id="SGD:S000006241"/>
<dbReference type="SGD" id="S000006241">
    <property type="gene designation" value="ERV2"/>
</dbReference>
<dbReference type="VEuPathDB" id="FungiDB:YPR037C"/>
<dbReference type="eggNOG" id="KOG3355">
    <property type="taxonomic scope" value="Eukaryota"/>
</dbReference>
<dbReference type="HOGENOM" id="CLU_070631_2_2_1"/>
<dbReference type="InParanoid" id="Q12284"/>
<dbReference type="OMA" id="PEYDCST"/>
<dbReference type="OrthoDB" id="59470at2759"/>
<dbReference type="BioCyc" id="YEAST:G3O-34195-MONOMER"/>
<dbReference type="BRENDA" id="1.8.3.2">
    <property type="organism ID" value="984"/>
</dbReference>
<dbReference type="BioGRID-ORCS" id="856152">
    <property type="hits" value="5 hits in 10 CRISPR screens"/>
</dbReference>
<dbReference type="ChiTaRS" id="ERV2">
    <property type="organism name" value="yeast"/>
</dbReference>
<dbReference type="EvolutionaryTrace" id="Q12284"/>
<dbReference type="PRO" id="PR:Q12284"/>
<dbReference type="Proteomes" id="UP000002311">
    <property type="component" value="Chromosome XVI"/>
</dbReference>
<dbReference type="RNAct" id="Q12284">
    <property type="molecule type" value="protein"/>
</dbReference>
<dbReference type="GO" id="GO:0005783">
    <property type="term" value="C:endoplasmic reticulum"/>
    <property type="evidence" value="ECO:0000318"/>
    <property type="project" value="GO_Central"/>
</dbReference>
<dbReference type="GO" id="GO:0005789">
    <property type="term" value="C:endoplasmic reticulum membrane"/>
    <property type="evidence" value="ECO:0000314"/>
    <property type="project" value="SGD"/>
</dbReference>
<dbReference type="GO" id="GO:0000324">
    <property type="term" value="C:fungal-type vacuole"/>
    <property type="evidence" value="ECO:0007005"/>
    <property type="project" value="SGD"/>
</dbReference>
<dbReference type="GO" id="GO:0000329">
    <property type="term" value="C:fungal-type vacuole membrane"/>
    <property type="evidence" value="ECO:0007005"/>
    <property type="project" value="SGD"/>
</dbReference>
<dbReference type="GO" id="GO:0050660">
    <property type="term" value="F:flavin adenine dinucleotide binding"/>
    <property type="evidence" value="ECO:0000318"/>
    <property type="project" value="GO_Central"/>
</dbReference>
<dbReference type="GO" id="GO:0016971">
    <property type="term" value="F:flavin-dependent sulfhydryl oxidase activity"/>
    <property type="evidence" value="ECO:0000314"/>
    <property type="project" value="SGD"/>
</dbReference>
<dbReference type="GO" id="GO:0016972">
    <property type="term" value="F:thiol oxidase activity"/>
    <property type="evidence" value="ECO:0000314"/>
    <property type="project" value="SGD"/>
</dbReference>
<dbReference type="GO" id="GO:0060904">
    <property type="term" value="P:regulation of protein folding in endoplasmic reticulum"/>
    <property type="evidence" value="ECO:0000314"/>
    <property type="project" value="SGD"/>
</dbReference>
<dbReference type="FunFam" id="1.20.120.310:FF:000002">
    <property type="entry name" value="Sulfhydryl oxidase"/>
    <property type="match status" value="1"/>
</dbReference>
<dbReference type="Gene3D" id="1.20.120.310">
    <property type="entry name" value="ERV/ALR sulfhydryl oxidase domain"/>
    <property type="match status" value="1"/>
</dbReference>
<dbReference type="InterPro" id="IPR039799">
    <property type="entry name" value="ALR/ERV"/>
</dbReference>
<dbReference type="InterPro" id="IPR036774">
    <property type="entry name" value="ERV/ALR_sulphydryl_oxid_sf"/>
</dbReference>
<dbReference type="InterPro" id="IPR017905">
    <property type="entry name" value="ERV/ALR_sulphydryl_oxidase"/>
</dbReference>
<dbReference type="PANTHER" id="PTHR12645">
    <property type="entry name" value="ALR/ERV"/>
    <property type="match status" value="1"/>
</dbReference>
<dbReference type="PANTHER" id="PTHR12645:SF1">
    <property type="entry name" value="FAD-LINKED SULFHYDRYL OXIDASE ERV2"/>
    <property type="match status" value="1"/>
</dbReference>
<dbReference type="Pfam" id="PF04777">
    <property type="entry name" value="Evr1_Alr"/>
    <property type="match status" value="1"/>
</dbReference>
<dbReference type="SUPFAM" id="SSF69000">
    <property type="entry name" value="FAD-dependent thiol oxidase"/>
    <property type="match status" value="1"/>
</dbReference>
<dbReference type="PROSITE" id="PS51324">
    <property type="entry name" value="ERV_ALR"/>
    <property type="match status" value="1"/>
</dbReference>
<reference key="1">
    <citation type="journal article" date="1997" name="Nature">
        <title>The nucleotide sequence of Saccharomyces cerevisiae chromosome XVI.</title>
        <authorList>
            <person name="Bussey H."/>
            <person name="Storms R.K."/>
            <person name="Ahmed A."/>
            <person name="Albermann K."/>
            <person name="Allen E."/>
            <person name="Ansorge W."/>
            <person name="Araujo R."/>
            <person name="Aparicio A."/>
            <person name="Barrell B.G."/>
            <person name="Badcock K."/>
            <person name="Benes V."/>
            <person name="Botstein D."/>
            <person name="Bowman S."/>
            <person name="Brueckner M."/>
            <person name="Carpenter J."/>
            <person name="Cherry J.M."/>
            <person name="Chung E."/>
            <person name="Churcher C.M."/>
            <person name="Coster F."/>
            <person name="Davis K."/>
            <person name="Davis R.W."/>
            <person name="Dietrich F.S."/>
            <person name="Delius H."/>
            <person name="DiPaolo T."/>
            <person name="Dubois E."/>
            <person name="Duesterhoeft A."/>
            <person name="Duncan M."/>
            <person name="Floeth M."/>
            <person name="Fortin N."/>
            <person name="Friesen J.D."/>
            <person name="Fritz C."/>
            <person name="Goffeau A."/>
            <person name="Hall J."/>
            <person name="Hebling U."/>
            <person name="Heumann K."/>
            <person name="Hilbert H."/>
            <person name="Hillier L.W."/>
            <person name="Hunicke-Smith S."/>
            <person name="Hyman R.W."/>
            <person name="Johnston M."/>
            <person name="Kalman S."/>
            <person name="Kleine K."/>
            <person name="Komp C."/>
            <person name="Kurdi O."/>
            <person name="Lashkari D."/>
            <person name="Lew H."/>
            <person name="Lin A."/>
            <person name="Lin D."/>
            <person name="Louis E.J."/>
            <person name="Marathe R."/>
            <person name="Messenguy F."/>
            <person name="Mewes H.-W."/>
            <person name="Mirtipati S."/>
            <person name="Moestl D."/>
            <person name="Mueller-Auer S."/>
            <person name="Namath A."/>
            <person name="Nentwich U."/>
            <person name="Oefner P."/>
            <person name="Pearson D."/>
            <person name="Petel F.X."/>
            <person name="Pohl T.M."/>
            <person name="Purnelle B."/>
            <person name="Rajandream M.A."/>
            <person name="Rechmann S."/>
            <person name="Rieger M."/>
            <person name="Riles L."/>
            <person name="Roberts D."/>
            <person name="Schaefer M."/>
            <person name="Scharfe M."/>
            <person name="Scherens B."/>
            <person name="Schramm S."/>
            <person name="Schroeder M."/>
            <person name="Sdicu A.-M."/>
            <person name="Tettelin H."/>
            <person name="Urrestarazu L.A."/>
            <person name="Ushinsky S."/>
            <person name="Vierendeels F."/>
            <person name="Vissers S."/>
            <person name="Voss H."/>
            <person name="Walsh S.V."/>
            <person name="Wambutt R."/>
            <person name="Wang Y."/>
            <person name="Wedler E."/>
            <person name="Wedler H."/>
            <person name="Winnett E."/>
            <person name="Zhong W.-W."/>
            <person name="Zollner A."/>
            <person name="Vo D.H."/>
            <person name="Hani J."/>
        </authorList>
    </citation>
    <scope>NUCLEOTIDE SEQUENCE [LARGE SCALE GENOMIC DNA]</scope>
    <source>
        <strain>ATCC 204508 / S288c</strain>
    </source>
</reference>
<reference key="2">
    <citation type="journal article" date="2014" name="G3 (Bethesda)">
        <title>The reference genome sequence of Saccharomyces cerevisiae: Then and now.</title>
        <authorList>
            <person name="Engel S.R."/>
            <person name="Dietrich F.S."/>
            <person name="Fisk D.G."/>
            <person name="Binkley G."/>
            <person name="Balakrishnan R."/>
            <person name="Costanzo M.C."/>
            <person name="Dwight S.S."/>
            <person name="Hitz B.C."/>
            <person name="Karra K."/>
            <person name="Nash R.S."/>
            <person name="Weng S."/>
            <person name="Wong E.D."/>
            <person name="Lloyd P."/>
            <person name="Skrzypek M.S."/>
            <person name="Miyasato S.R."/>
            <person name="Simison M."/>
            <person name="Cherry J.M."/>
        </authorList>
    </citation>
    <scope>GENOME REANNOTATION</scope>
    <source>
        <strain>ATCC 204508 / S288c</strain>
    </source>
</reference>
<reference key="3">
    <citation type="journal article" date="1998" name="Yeast">
        <title>Functional comparison of the yeast scERV1 and scERV2 genes.</title>
        <authorList>
            <person name="Stein G."/>
            <person name="Lisowsky T."/>
        </authorList>
    </citation>
    <scope>CHARACTERIZATION</scope>
</reference>
<reference key="4">
    <citation type="journal article" date="2001" name="J. Biol. Chem.">
        <title>Yeast ERV2p is the first microsomal FAD-linked sulfhydryl oxidase of the Erv1p/Alrp protein family.</title>
        <authorList>
            <person name="Gerber J."/>
            <person name="Muehlenhoff U."/>
            <person name="Hofhaus G."/>
            <person name="Lill R."/>
            <person name="Lisowsky T."/>
        </authorList>
    </citation>
    <scope>FUNCTION</scope>
    <scope>SUBCELLULAR LOCATION</scope>
    <scope>FAD-BINDING</scope>
    <scope>SUBUNIT</scope>
    <scope>CATALYTIC ACTIVITY</scope>
</reference>
<reference key="5">
    <citation type="journal article" date="2001" name="Nat. Cell Biol.">
        <title>A flavoprotein oxidase defines a new endoplasmic reticulum pathway for biosynthetic disulphide bond formation.</title>
        <authorList>
            <person name="Sevier C.S."/>
            <person name="Cuozzo J.W."/>
            <person name="Vala A."/>
            <person name="Aaslund F."/>
            <person name="Kaiser C.A."/>
        </authorList>
    </citation>
    <scope>FUNCTION</scope>
    <scope>SUBCELLULAR LOCATION</scope>
    <scope>FAD-BINDING</scope>
    <scope>MUTAGENESIS OF CYS-121 AND CYS-124</scope>
    <scope>SUBUNIT</scope>
    <scope>INTERACTION WITH PDI1</scope>
</reference>
<reference key="6">
    <citation type="journal article" date="2003" name="Nature">
        <title>Global analysis of protein expression in yeast.</title>
        <authorList>
            <person name="Ghaemmaghami S."/>
            <person name="Huh W.-K."/>
            <person name="Bower K."/>
            <person name="Howson R.W."/>
            <person name="Belle A."/>
            <person name="Dephoure N."/>
            <person name="O'Shea E.K."/>
            <person name="Weissman J.S."/>
        </authorList>
    </citation>
    <scope>LEVEL OF PROTEIN EXPRESSION [LARGE SCALE ANALYSIS]</scope>
</reference>
<reference key="7">
    <citation type="journal article" date="2012" name="Proc. Natl. Acad. Sci. U.S.A.">
        <title>N-terminal acetylome analyses and functional insights of the N-terminal acetyltransferase NatB.</title>
        <authorList>
            <person name="Van Damme P."/>
            <person name="Lasa M."/>
            <person name="Polevoda B."/>
            <person name="Gazquez C."/>
            <person name="Elosegui-Artola A."/>
            <person name="Kim D.S."/>
            <person name="De Juan-Pardo E."/>
            <person name="Demeyer K."/>
            <person name="Hole K."/>
            <person name="Larrea E."/>
            <person name="Timmerman E."/>
            <person name="Prieto J."/>
            <person name="Arnesen T."/>
            <person name="Sherman F."/>
            <person name="Gevaert K."/>
            <person name="Aldabe R."/>
        </authorList>
    </citation>
    <scope>IDENTIFICATION BY MASS SPECTROMETRY [LARGE SCALE ANALYSIS]</scope>
</reference>
<reference evidence="7 8" key="8">
    <citation type="journal article" date="2002" name="Nat. Struct. Biol.">
        <title>A new FAD-binding fold and intersubunit disulfide shuttle in the thiol oxidase Erv2p.</title>
        <authorList>
            <person name="Gross E."/>
            <person name="Sevier C.S."/>
            <person name="Vala A."/>
            <person name="Kaiser C.A."/>
            <person name="Fass D."/>
        </authorList>
    </citation>
    <scope>X-RAY CRYSTALLOGRAPHY (1.5 ANGSTROMS) OF 71-187 IN COMPLEX WITH FAD</scope>
    <scope>COFACTOR</scope>
    <scope>DISULFIDE BONDS</scope>
</reference>
<keyword id="KW-0002">3D-structure</keyword>
<keyword id="KW-1015">Disulfide bond</keyword>
<keyword id="KW-0256">Endoplasmic reticulum</keyword>
<keyword id="KW-0274">FAD</keyword>
<keyword id="KW-0285">Flavoprotein</keyword>
<keyword id="KW-0472">Membrane</keyword>
<keyword id="KW-0560">Oxidoreductase</keyword>
<keyword id="KW-1185">Reference proteome</keyword>
<keyword id="KW-0735">Signal-anchor</keyword>
<keyword id="KW-0812">Transmembrane</keyword>
<keyword id="KW-1133">Transmembrane helix</keyword>
<evidence type="ECO:0000255" key="1"/>
<evidence type="ECO:0000255" key="2">
    <source>
        <dbReference type="PROSITE-ProRule" id="PRU00654"/>
    </source>
</evidence>
<evidence type="ECO:0000269" key="3">
    <source>
    </source>
</evidence>
<evidence type="ECO:0000269" key="4">
    <source>
    </source>
</evidence>
<evidence type="ECO:0000269" key="5">
    <source>
    </source>
</evidence>
<evidence type="ECO:0000269" key="6">
    <source>
    </source>
</evidence>
<evidence type="ECO:0007744" key="7">
    <source>
        <dbReference type="PDB" id="1JR8"/>
    </source>
</evidence>
<evidence type="ECO:0007744" key="8">
    <source>
        <dbReference type="PDB" id="1JRA"/>
    </source>
</evidence>
<evidence type="ECO:0007829" key="9">
    <source>
        <dbReference type="PDB" id="1JR8"/>
    </source>
</evidence>